<dbReference type="EC" id="3.1.26.4"/>
<dbReference type="EMBL" id="L18927">
    <property type="protein sequence ID" value="AAA17434.1"/>
    <property type="molecule type" value="Genomic_DNA"/>
</dbReference>
<dbReference type="EMBL" id="AE013218">
    <property type="protein sequence ID" value="AAM67798.1"/>
    <property type="molecule type" value="Genomic_DNA"/>
</dbReference>
<dbReference type="PIR" id="I40593">
    <property type="entry name" value="I40593"/>
</dbReference>
<dbReference type="RefSeq" id="WP_011053765.1">
    <property type="nucleotide sequence ID" value="NC_004061.1"/>
</dbReference>
<dbReference type="SMR" id="Q08885"/>
<dbReference type="STRING" id="198804.BUsg_239"/>
<dbReference type="GeneID" id="93003708"/>
<dbReference type="KEGG" id="bas:BUsg_239"/>
<dbReference type="eggNOG" id="COG0328">
    <property type="taxonomic scope" value="Bacteria"/>
</dbReference>
<dbReference type="HOGENOM" id="CLU_030894_6_0_6"/>
<dbReference type="Proteomes" id="UP000000416">
    <property type="component" value="Chromosome"/>
</dbReference>
<dbReference type="GO" id="GO:0005737">
    <property type="term" value="C:cytoplasm"/>
    <property type="evidence" value="ECO:0007669"/>
    <property type="project" value="UniProtKB-SubCell"/>
</dbReference>
<dbReference type="GO" id="GO:0000287">
    <property type="term" value="F:magnesium ion binding"/>
    <property type="evidence" value="ECO:0007669"/>
    <property type="project" value="UniProtKB-UniRule"/>
</dbReference>
<dbReference type="GO" id="GO:0003676">
    <property type="term" value="F:nucleic acid binding"/>
    <property type="evidence" value="ECO:0007669"/>
    <property type="project" value="InterPro"/>
</dbReference>
<dbReference type="GO" id="GO:0004523">
    <property type="term" value="F:RNA-DNA hybrid ribonuclease activity"/>
    <property type="evidence" value="ECO:0007669"/>
    <property type="project" value="UniProtKB-UniRule"/>
</dbReference>
<dbReference type="GO" id="GO:0043137">
    <property type="term" value="P:DNA replication, removal of RNA primer"/>
    <property type="evidence" value="ECO:0007669"/>
    <property type="project" value="TreeGrafter"/>
</dbReference>
<dbReference type="CDD" id="cd09278">
    <property type="entry name" value="RNase_HI_prokaryote_like"/>
    <property type="match status" value="1"/>
</dbReference>
<dbReference type="Gene3D" id="3.30.420.10">
    <property type="entry name" value="Ribonuclease H-like superfamily/Ribonuclease H"/>
    <property type="match status" value="1"/>
</dbReference>
<dbReference type="HAMAP" id="MF_00042">
    <property type="entry name" value="RNase_H"/>
    <property type="match status" value="1"/>
</dbReference>
<dbReference type="InterPro" id="IPR050092">
    <property type="entry name" value="RNase_H"/>
</dbReference>
<dbReference type="InterPro" id="IPR012337">
    <property type="entry name" value="RNaseH-like_sf"/>
</dbReference>
<dbReference type="InterPro" id="IPR002156">
    <property type="entry name" value="RNaseH_domain"/>
</dbReference>
<dbReference type="InterPro" id="IPR036397">
    <property type="entry name" value="RNaseH_sf"/>
</dbReference>
<dbReference type="InterPro" id="IPR022892">
    <property type="entry name" value="RNaseHI"/>
</dbReference>
<dbReference type="NCBIfam" id="NF001236">
    <property type="entry name" value="PRK00203.1"/>
    <property type="match status" value="1"/>
</dbReference>
<dbReference type="PANTHER" id="PTHR10642">
    <property type="entry name" value="RIBONUCLEASE H1"/>
    <property type="match status" value="1"/>
</dbReference>
<dbReference type="PANTHER" id="PTHR10642:SF26">
    <property type="entry name" value="RIBONUCLEASE H1"/>
    <property type="match status" value="1"/>
</dbReference>
<dbReference type="Pfam" id="PF00075">
    <property type="entry name" value="RNase_H"/>
    <property type="match status" value="1"/>
</dbReference>
<dbReference type="SUPFAM" id="SSF53098">
    <property type="entry name" value="Ribonuclease H-like"/>
    <property type="match status" value="1"/>
</dbReference>
<dbReference type="PROSITE" id="PS50879">
    <property type="entry name" value="RNASE_H_1"/>
    <property type="match status" value="1"/>
</dbReference>
<organism>
    <name type="scientific">Buchnera aphidicola subsp. Schizaphis graminum (strain Sg)</name>
    <dbReference type="NCBI Taxonomy" id="198804"/>
    <lineage>
        <taxon>Bacteria</taxon>
        <taxon>Pseudomonadati</taxon>
        <taxon>Pseudomonadota</taxon>
        <taxon>Gammaproteobacteria</taxon>
        <taxon>Enterobacterales</taxon>
        <taxon>Erwiniaceae</taxon>
        <taxon>Buchnera</taxon>
    </lineage>
</organism>
<proteinExistence type="inferred from homology"/>
<reference key="1">
    <citation type="journal article" date="1993" name="Gene">
        <title>Buchnera aphidicola (a prokaryotic endosymbiont of aphids) contains a putative 16S rRNA operon unlinked to the 23S rRNA-encoding gene: sequence determination, and promoter and terminator analysis.</title>
        <authorList>
            <person name="Munson M.A."/>
            <person name="Baumann L."/>
            <person name="Baumann P."/>
        </authorList>
    </citation>
    <scope>NUCLEOTIDE SEQUENCE [GENOMIC DNA]</scope>
</reference>
<reference key="2">
    <citation type="journal article" date="2002" name="Science">
        <title>50 million years of genomic stasis in endosymbiotic bacteria.</title>
        <authorList>
            <person name="Tamas I."/>
            <person name="Klasson L."/>
            <person name="Canbaeck B."/>
            <person name="Naeslund A.K."/>
            <person name="Eriksson A.-S."/>
            <person name="Wernegreen J.J."/>
            <person name="Sandstroem J.P."/>
            <person name="Moran N.A."/>
            <person name="Andersson S.G.E."/>
        </authorList>
    </citation>
    <scope>NUCLEOTIDE SEQUENCE [LARGE SCALE GENOMIC DNA]</scope>
    <source>
        <strain>Sg</strain>
    </source>
</reference>
<evidence type="ECO:0000250" key="1"/>
<evidence type="ECO:0000255" key="2">
    <source>
        <dbReference type="PROSITE-ProRule" id="PRU00408"/>
    </source>
</evidence>
<evidence type="ECO:0000305" key="3"/>
<sequence length="161" mass="18734">MLKLVKMFSDGSCLGNPGSGGYGTILRYKLHEKILTSGFFLTTNNRMELMGVICGLESLKESCIVEITIDSQYVKQGITNWIATWEKKKWKTTKKKLIKNLDLWLRINAVIKNHHITWFWVKAHMGHLENERCDKIARQSAQSPSVKDFFYENNFYQNKNL</sequence>
<gene>
    <name type="primary">rnhA</name>
    <name type="synonym">rnh</name>
    <name type="ordered locus">BUsg_239</name>
</gene>
<keyword id="KW-0963">Cytoplasm</keyword>
<keyword id="KW-0255">Endonuclease</keyword>
<keyword id="KW-0378">Hydrolase</keyword>
<keyword id="KW-0460">Magnesium</keyword>
<keyword id="KW-0479">Metal-binding</keyword>
<keyword id="KW-0540">Nuclease</keyword>
<name>RNH_BUCAP</name>
<comment type="function">
    <text evidence="1">Endonuclease that specifically degrades the RNA of RNA-DNA hybrids.</text>
</comment>
<comment type="catalytic activity">
    <reaction>
        <text>Endonucleolytic cleavage to 5'-phosphomonoester.</text>
        <dbReference type="EC" id="3.1.26.4"/>
    </reaction>
</comment>
<comment type="cofactor">
    <cofactor evidence="1">
        <name>Mg(2+)</name>
        <dbReference type="ChEBI" id="CHEBI:18420"/>
    </cofactor>
    <text evidence="1">Binds 1 Mg(2+) ion per subunit. May bind a second metal ion at a regulatory site, or after substrate binding.</text>
</comment>
<comment type="subunit">
    <text evidence="1">Monomer.</text>
</comment>
<comment type="subcellular location">
    <subcellularLocation>
        <location evidence="3">Cytoplasm</location>
    </subcellularLocation>
</comment>
<comment type="similarity">
    <text evidence="3">Belongs to the RNase H family.</text>
</comment>
<protein>
    <recommendedName>
        <fullName>Ribonuclease H</fullName>
        <shortName>RNase H</shortName>
        <ecNumber>3.1.26.4</ecNumber>
    </recommendedName>
</protein>
<accession>Q08885</accession>
<feature type="chain" id="PRO_0000195367" description="Ribonuclease H">
    <location>
        <begin position="1"/>
        <end position="161"/>
    </location>
</feature>
<feature type="domain" description="RNase H type-1" evidence="2">
    <location>
        <begin position="1"/>
        <end position="142"/>
    </location>
</feature>
<feature type="binding site" evidence="1">
    <location>
        <position position="10"/>
    </location>
    <ligand>
        <name>Mg(2+)</name>
        <dbReference type="ChEBI" id="CHEBI:18420"/>
        <label>1</label>
    </ligand>
</feature>
<feature type="binding site" evidence="1">
    <location>
        <position position="10"/>
    </location>
    <ligand>
        <name>Mg(2+)</name>
        <dbReference type="ChEBI" id="CHEBI:18420"/>
        <label>2</label>
    </ligand>
</feature>
<feature type="binding site" evidence="1">
    <location>
        <position position="48"/>
    </location>
    <ligand>
        <name>Mg(2+)</name>
        <dbReference type="ChEBI" id="CHEBI:18420"/>
        <label>1</label>
    </ligand>
</feature>
<feature type="binding site" evidence="1">
    <location>
        <position position="70"/>
    </location>
    <ligand>
        <name>Mg(2+)</name>
        <dbReference type="ChEBI" id="CHEBI:18420"/>
        <label>1</label>
    </ligand>
</feature>
<feature type="binding site" evidence="1">
    <location>
        <position position="134"/>
    </location>
    <ligand>
        <name>Mg(2+)</name>
        <dbReference type="ChEBI" id="CHEBI:18420"/>
        <label>2</label>
    </ligand>
</feature>